<sequence length="693" mass="78668">MADTLEFNDIYQEVKGSMNDGRLRLSRAGLMYKNNKTGKVENISAADIAEVVWRRVALGHGIKLLTNGGHVYKYDGFRETEYDKLFDYFKSHFSVELVEKDLCVKGWNWGSVRFGGQLLSFDIGDQPAFELPLSNVSQCTTGKNEVTLEFHQNDDSEVSLMEIRFYVPPTQDDGGDSVEAFAQNVLSKADVIQATGDAVCIFRELQCLTPRGRYDIRIYPTFLHLHGKTFDYKIPYTTVLRLFLLPHKDQRQMFFVISLDPPIKQGQTRYHFLILLFSKDEDMTLTLNMSEEEVERRFEGKLKKSMSGCLYEMVSRVMKALVNRKITVPGNFLGHSGSQCITCSYKASSGLLYPLERGFIYVHKPPVHIRFDEITCVNFARGTTTTRSFDFEIETKQGSQYTFSSIEREEYGKLFDFVNAKKLSIKNRGLKEGMKPAYDDYADSDEDQHDAYLERMKEEGKIRENADSDESGDETDESFNPGEEEEEVAEEFDSNPSASSSSADSDDDTDKKKDAKRAKIVKQKKPRKKPEAKKTKDPGAPKRPMSAYMLWLNASREKIKSENPGISITDLSKKAGEIWKNMSRDKKEEWDRRAEEAKRDYEKAMKEYNTSAPTEASKKEKKTKGEKKKAETSEKKKQKPSSPARAAPKLNSESFKSKEFVSSDDSSSDDSAQKKDSEEIASTPASSAESGSD</sequence>
<evidence type="ECO:0000250" key="1">
    <source>
        <dbReference type="UniProtKB" id="Q05344"/>
    </source>
</evidence>
<evidence type="ECO:0000255" key="2">
    <source>
        <dbReference type="PROSITE-ProRule" id="PRU00267"/>
    </source>
</evidence>
<evidence type="ECO:0000256" key="3">
    <source>
        <dbReference type="SAM" id="MobiDB-lite"/>
    </source>
</evidence>
<evidence type="ECO:0000269" key="4">
    <source>
    </source>
</evidence>
<evidence type="ECO:0000269" key="5">
    <source>
    </source>
</evidence>
<evidence type="ECO:0000305" key="6"/>
<comment type="function">
    <text evidence="4 5">Component of the FACT complex, a general chromatin factor that acts to reorganize nucleosomes. The FACT complex is involved in multiple processes that require DNA as a template such as mRNA elongation, DNA replication and DNA repair. During transcription elongation the FACT complex acts as a histone chaperone that both destabilizes and restores nucleosomal structure. It facilitates the passage of RNA polymerase II and transcription by promoting the dissociation of one histone H2A-H2B dimer from the nucleosome, then subsequently promotes the reestablishment of the nucleosome following the passage of RNA polymerase II. Binds specifically to double-stranded DNA.</text>
</comment>
<comment type="subunit">
    <text>Component of the FACT complex (also known as the DUF complex), a stable heterodimer of ssrp1 and supt16h. May also be a component of a ck2-spt16-ssrp1 complex which forms following UV irradiation, composed of ssrp1, supt16h, csnk2a1, csnk2a2 and csnk2b. The FACT complex may also interact with vcp.</text>
</comment>
<comment type="subcellular location">
    <subcellularLocation>
        <location evidence="1">Nucleus</location>
    </subcellularLocation>
    <subcellularLocation>
        <location evidence="1">Chromosome</location>
    </subcellularLocation>
    <subcellularLocation>
        <location evidence="1">Nucleus</location>
        <location evidence="1">Nucleolus</location>
    </subcellularLocation>
    <text evidence="1">Colocalizes with RNA polymerase II on chromatin. Recruited to actively transcribed loci.</text>
</comment>
<comment type="similarity">
    <text evidence="6">Belongs to the SSRP1 family.</text>
</comment>
<comment type="sequence caution" evidence="6">
    <conflict type="miscellaneous discrepancy">
        <sequence resource="EMBL-CDS" id="AAH82613"/>
    </conflict>
    <text>Contaminating sequence. Potential poly-A sequence.</text>
</comment>
<accession>Q9W602</accession>
<accession>Q640L1</accession>
<organism>
    <name type="scientific">Xenopus laevis</name>
    <name type="common">African clawed frog</name>
    <dbReference type="NCBI Taxonomy" id="8355"/>
    <lineage>
        <taxon>Eukaryota</taxon>
        <taxon>Metazoa</taxon>
        <taxon>Chordata</taxon>
        <taxon>Craniata</taxon>
        <taxon>Vertebrata</taxon>
        <taxon>Euteleostomi</taxon>
        <taxon>Amphibia</taxon>
        <taxon>Batrachia</taxon>
        <taxon>Anura</taxon>
        <taxon>Pipoidea</taxon>
        <taxon>Pipidae</taxon>
        <taxon>Xenopodinae</taxon>
        <taxon>Xenopus</taxon>
        <taxon>Xenopus</taxon>
    </lineage>
</organism>
<dbReference type="EMBL" id="AB004793">
    <property type="protein sequence ID" value="BAA76333.1"/>
    <property type="molecule type" value="mRNA"/>
</dbReference>
<dbReference type="EMBL" id="BC082613">
    <property type="protein sequence ID" value="AAH82613.1"/>
    <property type="status" value="ALT_SEQ"/>
    <property type="molecule type" value="mRNA"/>
</dbReference>
<dbReference type="RefSeq" id="NP_001084164.1">
    <property type="nucleotide sequence ID" value="NM_001090695.1"/>
</dbReference>
<dbReference type="SMR" id="Q9W602"/>
<dbReference type="BioGRID" id="100669">
    <property type="interactions" value="3"/>
</dbReference>
<dbReference type="GeneID" id="399344"/>
<dbReference type="KEGG" id="xla:399344"/>
<dbReference type="AGR" id="Xenbase:XB-GENE-994299"/>
<dbReference type="CTD" id="399344"/>
<dbReference type="Xenbase" id="XB-GENE-994299">
    <property type="gene designation" value="ssrp1.S"/>
</dbReference>
<dbReference type="OrthoDB" id="498543at2759"/>
<dbReference type="Proteomes" id="UP000186698">
    <property type="component" value="Chromosome 7S"/>
</dbReference>
<dbReference type="Bgee" id="399344">
    <property type="expression patterns" value="Expressed in spleen and 19 other cell types or tissues"/>
</dbReference>
<dbReference type="GO" id="GO:0035101">
    <property type="term" value="C:FACT complex"/>
    <property type="evidence" value="ECO:0000318"/>
    <property type="project" value="GO_Central"/>
</dbReference>
<dbReference type="GO" id="GO:0005730">
    <property type="term" value="C:nucleolus"/>
    <property type="evidence" value="ECO:0007669"/>
    <property type="project" value="UniProtKB-SubCell"/>
</dbReference>
<dbReference type="GO" id="GO:0003677">
    <property type="term" value="F:DNA binding"/>
    <property type="evidence" value="ECO:0007669"/>
    <property type="project" value="UniProtKB-KW"/>
</dbReference>
<dbReference type="GO" id="GO:0042393">
    <property type="term" value="F:histone binding"/>
    <property type="evidence" value="ECO:0000318"/>
    <property type="project" value="GO_Central"/>
</dbReference>
<dbReference type="GO" id="GO:0031491">
    <property type="term" value="F:nucleosome binding"/>
    <property type="evidence" value="ECO:0000318"/>
    <property type="project" value="GO_Central"/>
</dbReference>
<dbReference type="GO" id="GO:0006281">
    <property type="term" value="P:DNA repair"/>
    <property type="evidence" value="ECO:0007669"/>
    <property type="project" value="UniProtKB-KW"/>
</dbReference>
<dbReference type="GO" id="GO:0006260">
    <property type="term" value="P:DNA replication"/>
    <property type="evidence" value="ECO:0007669"/>
    <property type="project" value="UniProtKB-KW"/>
</dbReference>
<dbReference type="GO" id="GO:1902275">
    <property type="term" value="P:regulation of chromatin organization"/>
    <property type="evidence" value="ECO:0000318"/>
    <property type="project" value="GO_Central"/>
</dbReference>
<dbReference type="CDD" id="cd21994">
    <property type="entry name" value="HMG-box_SSRP1-like"/>
    <property type="match status" value="1"/>
</dbReference>
<dbReference type="CDD" id="cd13230">
    <property type="entry name" value="PH1_SSRP1-like"/>
    <property type="match status" value="1"/>
</dbReference>
<dbReference type="CDD" id="cd13231">
    <property type="entry name" value="PH2_SSRP1-like"/>
    <property type="match status" value="1"/>
</dbReference>
<dbReference type="FunFam" id="1.10.30.10:FF:000072">
    <property type="entry name" value="FACT complex subunit SSRP1"/>
    <property type="match status" value="1"/>
</dbReference>
<dbReference type="FunFam" id="2.30.29.220:FF:000001">
    <property type="entry name" value="FACT complex subunit SSRP1"/>
    <property type="match status" value="1"/>
</dbReference>
<dbReference type="FunFam" id="2.30.29.30:FF:000119">
    <property type="entry name" value="FACT complex subunit SSRP1"/>
    <property type="match status" value="1"/>
</dbReference>
<dbReference type="FunFam" id="2.30.29.150:FF:000001">
    <property type="entry name" value="Fact complex subunit ssrp1"/>
    <property type="match status" value="1"/>
</dbReference>
<dbReference type="FunFam" id="2.30.29.30:FF:000098">
    <property type="entry name" value="Fact complex subunit ssrp1"/>
    <property type="match status" value="1"/>
</dbReference>
<dbReference type="Gene3D" id="2.30.29.150">
    <property type="match status" value="1"/>
</dbReference>
<dbReference type="Gene3D" id="1.10.30.10">
    <property type="entry name" value="High mobility group box domain"/>
    <property type="match status" value="1"/>
</dbReference>
<dbReference type="Gene3D" id="2.30.29.30">
    <property type="entry name" value="Pleckstrin-homology domain (PH domain)/Phosphotyrosine-binding domain (PTB)"/>
    <property type="match status" value="2"/>
</dbReference>
<dbReference type="Gene3D" id="2.30.29.220">
    <property type="entry name" value="Structure-specific recognition protein (SSRP1)"/>
    <property type="match status" value="1"/>
</dbReference>
<dbReference type="InterPro" id="IPR009071">
    <property type="entry name" value="HMG_box_dom"/>
</dbReference>
<dbReference type="InterPro" id="IPR036910">
    <property type="entry name" value="HMG_box_dom_sf"/>
</dbReference>
<dbReference type="InterPro" id="IPR011993">
    <property type="entry name" value="PH-like_dom_sf"/>
</dbReference>
<dbReference type="InterPro" id="IPR013719">
    <property type="entry name" value="RTT106/SPT16-like_middle_dom"/>
</dbReference>
<dbReference type="InterPro" id="IPR050454">
    <property type="entry name" value="RTT106/SSRP1_HistChap/FACT"/>
</dbReference>
<dbReference type="InterPro" id="IPR048993">
    <property type="entry name" value="SSRP1-like_PH1"/>
</dbReference>
<dbReference type="InterPro" id="IPR000969">
    <property type="entry name" value="SSRP1/POB3"/>
</dbReference>
<dbReference type="InterPro" id="IPR035417">
    <property type="entry name" value="SSRP1/POB3_N"/>
</dbReference>
<dbReference type="InterPro" id="IPR048985">
    <property type="entry name" value="SSRP1_C"/>
</dbReference>
<dbReference type="InterPro" id="IPR024954">
    <property type="entry name" value="SSRP1_DD"/>
</dbReference>
<dbReference type="InterPro" id="IPR038167">
    <property type="entry name" value="SSRP1_sf"/>
</dbReference>
<dbReference type="PANTHER" id="PTHR45849">
    <property type="entry name" value="FACT COMPLEX SUBUNIT SSRP1"/>
    <property type="match status" value="1"/>
</dbReference>
<dbReference type="PANTHER" id="PTHR45849:SF1">
    <property type="entry name" value="FACT COMPLEX SUBUNIT SSRP1"/>
    <property type="match status" value="1"/>
</dbReference>
<dbReference type="Pfam" id="PF00505">
    <property type="entry name" value="HMG_box"/>
    <property type="match status" value="1"/>
</dbReference>
<dbReference type="Pfam" id="PF21103">
    <property type="entry name" value="PH1_SSRP1-like"/>
    <property type="match status" value="1"/>
</dbReference>
<dbReference type="Pfam" id="PF17292">
    <property type="entry name" value="POB3_N"/>
    <property type="match status" value="1"/>
</dbReference>
<dbReference type="Pfam" id="PF08512">
    <property type="entry name" value="Rttp106-like_middle"/>
    <property type="match status" value="1"/>
</dbReference>
<dbReference type="Pfam" id="PF03531">
    <property type="entry name" value="SSrecog"/>
    <property type="match status" value="1"/>
</dbReference>
<dbReference type="Pfam" id="PF21092">
    <property type="entry name" value="SSRP1_C"/>
    <property type="match status" value="1"/>
</dbReference>
<dbReference type="PRINTS" id="PR00887">
    <property type="entry name" value="SSRCOGNITION"/>
</dbReference>
<dbReference type="SMART" id="SM00398">
    <property type="entry name" value="HMG"/>
    <property type="match status" value="1"/>
</dbReference>
<dbReference type="SMART" id="SM01287">
    <property type="entry name" value="Rtt106"/>
    <property type="match status" value="1"/>
</dbReference>
<dbReference type="SUPFAM" id="SSF47095">
    <property type="entry name" value="HMG-box"/>
    <property type="match status" value="1"/>
</dbReference>
<dbReference type="SUPFAM" id="SSF50729">
    <property type="entry name" value="PH domain-like"/>
    <property type="match status" value="1"/>
</dbReference>
<dbReference type="PROSITE" id="PS50118">
    <property type="entry name" value="HMG_BOX_2"/>
    <property type="match status" value="1"/>
</dbReference>
<keyword id="KW-0158">Chromosome</keyword>
<keyword id="KW-0903">Direct protein sequencing</keyword>
<keyword id="KW-0227">DNA damage</keyword>
<keyword id="KW-0234">DNA repair</keyword>
<keyword id="KW-0235">DNA replication</keyword>
<keyword id="KW-0238">DNA-binding</keyword>
<keyword id="KW-0539">Nucleus</keyword>
<keyword id="KW-1185">Reference proteome</keyword>
<keyword id="KW-0804">Transcription</keyword>
<keyword id="KW-0805">Transcription regulation</keyword>
<reference key="1">
    <citation type="journal article" date="1999" name="Curr. Biol.">
        <title>DNA unwinding factor involved in DNA replication in cell-free extracts of Xenopus eggs.</title>
        <authorList>
            <person name="Okuhara K."/>
            <person name="Ohta K."/>
            <person name="Seo H."/>
            <person name="Shioda M."/>
            <person name="Yamada T."/>
            <person name="Tanaka Y."/>
            <person name="Dohmae N."/>
            <person name="Seyama Y."/>
            <person name="Shibata T."/>
            <person name="Murofushi H."/>
        </authorList>
    </citation>
    <scope>NUCLEOTIDE SEQUENCE [MRNA]</scope>
    <scope>PROTEIN SEQUENCE OF 228-234; 450-462 AND 476-484</scope>
    <scope>FUNCTION</scope>
    <scope>INTERACTION WITH SUPT16H</scope>
    <source>
        <tissue>Egg</tissue>
    </source>
</reference>
<reference key="2">
    <citation type="submission" date="2004-09" db="EMBL/GenBank/DDBJ databases">
        <authorList>
            <consortium name="NIH - Xenopus Gene Collection (XGC) project"/>
        </authorList>
    </citation>
    <scope>NUCLEOTIDE SEQUENCE [LARGE SCALE MRNA] OF 1-454</scope>
    <source>
        <tissue>Embryo</tissue>
    </source>
</reference>
<reference key="3">
    <citation type="journal article" date="2000" name="FEBS Lett.">
        <title>p97 ATPase, an ATPase involved in membrane fusion, interacts with DNA unwinding factor (DUF) that functions in DNA replication.</title>
        <authorList>
            <person name="Yamada T."/>
            <person name="Okuhara K."/>
            <person name="Iwamatsu A."/>
            <person name="Seo H."/>
            <person name="Ohta K."/>
            <person name="Shibata T."/>
            <person name="Murofushi H."/>
        </authorList>
    </citation>
    <scope>INTERACTION WITH VCP</scope>
</reference>
<reference key="4">
    <citation type="journal article" date="2003" name="Biochem. Biophys. Res. Commun.">
        <title>Incorporation of DUF/FACT into chromatin enhances the accessibility of nucleosomal DNA.</title>
        <authorList>
            <person name="Seo H."/>
            <person name="Okuhara K."/>
            <person name="Kurumizaka H."/>
            <person name="Yamada T."/>
            <person name="Shibata T."/>
            <person name="Ohta K."/>
            <person name="Akiyama T."/>
            <person name="Murofushi H."/>
        </authorList>
    </citation>
    <scope>FUNCTION</scope>
    <scope>DNA-BINDING</scope>
</reference>
<protein>
    <recommendedName>
        <fullName>FACT complex subunit SSRP1</fullName>
    </recommendedName>
    <alternativeName>
        <fullName>DNA unwinding factor 87 kDa subunit</fullName>
        <shortName>DUF87</shortName>
    </alternativeName>
    <alternativeName>
        <fullName>Facilitates chromatin transcription complex subunit ssrp1</fullName>
    </alternativeName>
    <alternativeName>
        <fullName>Structure-specific recognition protein 1</fullName>
    </alternativeName>
</protein>
<gene>
    <name type="primary">ssrp1</name>
</gene>
<feature type="chain" id="PRO_0000245191" description="FACT complex subunit SSRP1">
    <location>
        <begin position="1"/>
        <end position="693"/>
    </location>
</feature>
<feature type="DNA-binding region" description="HMG box" evidence="2">
    <location>
        <begin position="541"/>
        <end position="609"/>
    </location>
</feature>
<feature type="region of interest" description="Disordered" evidence="3">
    <location>
        <begin position="460"/>
        <end position="693"/>
    </location>
</feature>
<feature type="compositionally biased region" description="Acidic residues" evidence="3">
    <location>
        <begin position="467"/>
        <end position="493"/>
    </location>
</feature>
<feature type="compositionally biased region" description="Low complexity" evidence="3">
    <location>
        <begin position="494"/>
        <end position="503"/>
    </location>
</feature>
<feature type="compositionally biased region" description="Basic residues" evidence="3">
    <location>
        <begin position="514"/>
        <end position="531"/>
    </location>
</feature>
<feature type="compositionally biased region" description="Basic and acidic residues" evidence="3">
    <location>
        <begin position="571"/>
        <end position="606"/>
    </location>
</feature>
<feature type="compositionally biased region" description="Polar residues" evidence="3">
    <location>
        <begin position="683"/>
        <end position="693"/>
    </location>
</feature>
<proteinExistence type="evidence at protein level"/>
<name>SSRP1_XENLA</name>